<evidence type="ECO:0000250" key="1">
    <source>
        <dbReference type="UniProtKB" id="A0A1C9J6A7"/>
    </source>
</evidence>
<evidence type="ECO:0000250" key="2">
    <source>
        <dbReference type="UniProtKB" id="Q40577"/>
    </source>
</evidence>
<evidence type="ECO:0000250" key="3">
    <source>
        <dbReference type="UniProtKB" id="Q6JD73"/>
    </source>
</evidence>
<evidence type="ECO:0000255" key="4"/>
<evidence type="ECO:0000269" key="5">
    <source ref="1"/>
</evidence>
<evidence type="ECO:0000303" key="6">
    <source ref="1"/>
</evidence>
<evidence type="ECO:0000305" key="7"/>
<proteinExistence type="evidence at protein level"/>
<sequence length="582" mass="67150">MSLIIQSLPHWSRIPPRPPQLSQFQNSSRPKPLIQAGQVQHNALQIARRSANYHPSIWDPQYIESLKSPYGDECFGTRLEKLKFEAKRLLEATIEPLSWLELVDSIQRLGVAYHFEDEIKEGLDGVYGVGAHAGDDLYTAALQFRLLRQHGYGVTPDIFNKFLEKERTFKACTSLDAKGLLSLYEASHTMIHGEEVLEDAKEFSVKHLNYLMGNLQNNLREQVQHALEMPLHWRMPRLEAKHYIDVNGRSDERNMVLLELARLDFNFVQSKHQEELKEVSRWWRDLGLAKKLGFSRDRLVENYLWAVGIAPEPKFSNCRKGLTKLISILTVIDDIYDVYGSLDELELFTEAVKRWDIEALETLPEYMKICYLALFNFVHEVSYDTLKDYGWNILPFIREEWERLCMSYLVEAEWFGNGNKPALDEYLRNGWISVGGPVAMVHAYFLQGRPIRKDSINFLDHGSELIYWSSVATRLNDDLGTSKAEMKRGDVPKAVECYMIQTGESYEDAREHIQGLVRDCWKKMNEECLKCCLPKSYVETVLNMVRTAQCIYQHGDGIGTSTGVTQDRVISLICEPVPSQWP</sequence>
<feature type="transit peptide" description="Chloroplast" evidence="4">
    <location>
        <begin position="1"/>
        <end position="35"/>
    </location>
</feature>
<feature type="chain" id="PRO_0000455072" description="Trans-ocimene synthase, chloroplastic">
    <location>
        <begin position="36"/>
        <end position="582"/>
    </location>
</feature>
<feature type="short sequence motif" description="DDXXD motif" evidence="7">
    <location>
        <begin position="333"/>
        <end position="337"/>
    </location>
</feature>
<feature type="binding site" evidence="2">
    <location>
        <position position="296"/>
    </location>
    <ligand>
        <name>(2E)-geranyl diphosphate</name>
        <dbReference type="ChEBI" id="CHEBI:58057"/>
    </ligand>
</feature>
<feature type="binding site" evidence="2">
    <location>
        <position position="333"/>
    </location>
    <ligand>
        <name>(2E)-geranyl diphosphate</name>
        <dbReference type="ChEBI" id="CHEBI:58057"/>
    </ligand>
</feature>
<feature type="binding site" evidence="2">
    <location>
        <position position="333"/>
    </location>
    <ligand>
        <name>Mg(2+)</name>
        <dbReference type="ChEBI" id="CHEBI:18420"/>
        <label>1</label>
    </ligand>
</feature>
<feature type="binding site" evidence="2">
    <location>
        <position position="333"/>
    </location>
    <ligand>
        <name>Mg(2+)</name>
        <dbReference type="ChEBI" id="CHEBI:18420"/>
        <label>2</label>
    </ligand>
</feature>
<feature type="binding site" evidence="2">
    <location>
        <position position="337"/>
    </location>
    <ligand>
        <name>(2E)-geranyl diphosphate</name>
        <dbReference type="ChEBI" id="CHEBI:58057"/>
    </ligand>
</feature>
<feature type="binding site" evidence="2">
    <location>
        <position position="337"/>
    </location>
    <ligand>
        <name>Mg(2+)</name>
        <dbReference type="ChEBI" id="CHEBI:18420"/>
        <label>1</label>
    </ligand>
</feature>
<feature type="binding site" evidence="2">
    <location>
        <position position="337"/>
    </location>
    <ligand>
        <name>Mg(2+)</name>
        <dbReference type="ChEBI" id="CHEBI:18420"/>
        <label>2</label>
    </ligand>
</feature>
<feature type="binding site" evidence="2">
    <location>
        <position position="474"/>
    </location>
    <ligand>
        <name>(2E)-geranyl diphosphate</name>
        <dbReference type="ChEBI" id="CHEBI:58057"/>
    </ligand>
</feature>
<feature type="binding site" evidence="2">
    <location>
        <position position="477"/>
    </location>
    <ligand>
        <name>(2E)-geranyl diphosphate</name>
        <dbReference type="ChEBI" id="CHEBI:58057"/>
    </ligand>
</feature>
<feature type="binding site" evidence="2">
    <location>
        <position position="477"/>
    </location>
    <ligand>
        <name>Mg(2+)</name>
        <dbReference type="ChEBI" id="CHEBI:18420"/>
        <label>3</label>
    </ligand>
</feature>
<feature type="binding site" evidence="2">
    <location>
        <position position="481"/>
    </location>
    <ligand>
        <name>Mg(2+)</name>
        <dbReference type="ChEBI" id="CHEBI:18420"/>
        <label>3</label>
    </ligand>
</feature>
<feature type="binding site" evidence="2">
    <location>
        <position position="485"/>
    </location>
    <ligand>
        <name>Mg(2+)</name>
        <dbReference type="ChEBI" id="CHEBI:18420"/>
        <label>3</label>
    </ligand>
</feature>
<name>TPS1_LITCU</name>
<accession>G0Y7D1</accession>
<keyword id="KW-0150">Chloroplast</keyword>
<keyword id="KW-0456">Lyase</keyword>
<keyword id="KW-0460">Magnesium</keyword>
<keyword id="KW-0479">Metal-binding</keyword>
<keyword id="KW-0934">Plastid</keyword>
<keyword id="KW-0809">Transit peptide</keyword>
<protein>
    <recommendedName>
        <fullName evidence="6">Trans-ocimene synthase, chloroplastic</fullName>
        <shortName evidence="6">(E)-beta-ocimene synthase</shortName>
        <ecNumber evidence="5">4.2.3.106</ecNumber>
    </recommendedName>
    <alternativeName>
        <fullName evidence="6">Terpene synthase 1</fullName>
        <shortName evidence="6">LcTPS1</shortName>
    </alternativeName>
</protein>
<gene>
    <name evidence="6" type="primary">TPS1</name>
</gene>
<organism>
    <name type="scientific">Litsea cubeba</name>
    <name type="common">Aromatic litsea</name>
    <name type="synonym">Laurus cubeba</name>
    <dbReference type="NCBI Taxonomy" id="155299"/>
    <lineage>
        <taxon>Eukaryota</taxon>
        <taxon>Viridiplantae</taxon>
        <taxon>Streptophyta</taxon>
        <taxon>Embryophyta</taxon>
        <taxon>Tracheophyta</taxon>
        <taxon>Spermatophyta</taxon>
        <taxon>Magnoliopsida</taxon>
        <taxon>Magnoliidae</taxon>
        <taxon>Laurales</taxon>
        <taxon>Lauraceae</taxon>
        <taxon>Litsea</taxon>
    </lineage>
</organism>
<comment type="function">
    <text evidence="5">Monoterpene synthase (TPS) involved in the biosynthesis of monoterpene natural products used by traditional Chinese medicine to treat headache, inflammation and intoxication (Ref.1). Catalyzes the conversion of (2E)-geranyl diphosphate (GPP) into (E)-beta-ocimene (Ref.1).</text>
</comment>
<comment type="catalytic activity">
    <reaction evidence="5">
        <text>(2E)-geranyl diphosphate = (E)-beta-ocimene + diphosphate</text>
        <dbReference type="Rhea" id="RHEA:32691"/>
        <dbReference type="ChEBI" id="CHEBI:33019"/>
        <dbReference type="ChEBI" id="CHEBI:58057"/>
        <dbReference type="ChEBI" id="CHEBI:64280"/>
        <dbReference type="EC" id="4.2.3.106"/>
    </reaction>
    <physiologicalReaction direction="left-to-right" evidence="5">
        <dbReference type="Rhea" id="RHEA:32692"/>
    </physiologicalReaction>
</comment>
<comment type="cofactor">
    <cofactor evidence="1">
        <name>Mg(2+)</name>
        <dbReference type="ChEBI" id="CHEBI:18420"/>
    </cofactor>
    <cofactor evidence="1">
        <name>Mn(2+)</name>
        <dbReference type="ChEBI" id="CHEBI:29035"/>
    </cofactor>
    <text evidence="1">Binds 3 Mg(2+) or Mn(2+) ions per subunit.</text>
</comment>
<comment type="pathway">
    <text evidence="5">Secondary metabolite biosynthesis; terpenoid biosynthesis.</text>
</comment>
<comment type="subunit">
    <text evidence="3">Monomer.</text>
</comment>
<comment type="subcellular location">
    <subcellularLocation>
        <location evidence="4">Plastid</location>
        <location evidence="4">Chloroplast</location>
    </subcellularLocation>
</comment>
<comment type="tissue specificity">
    <text evidence="5">Expressed in male and female leaves (Ref.1). Barely detectable in fruits and shoots (Ref.1).</text>
</comment>
<comment type="domain">
    <text evidence="7">The Asp-Asp-Xaa-Xaa-Asp/Glu (DDXXD/E) motif is important for the catalytic activity, presumably through binding to Mg(2+).</text>
</comment>
<comment type="similarity">
    <text evidence="7">Belongs to the terpene synthase family. Tpsb subfamily.</text>
</comment>
<reference key="1">
    <citation type="journal article" date="2011" name="Tree Genet. Genomes">
        <title>Molecular cloning and characterization of monoterpene synthases from Litsea cubeba (Lour.) Persoon.</title>
        <authorList>
            <person name="Chang Y.-T."/>
            <person name="Chu F.-H."/>
        </authorList>
    </citation>
    <scope>NUCLEOTIDE SEQUENCE [MRNA]</scope>
    <scope>FUNCTION</scope>
    <scope>CATALYTIC ACTIVITY</scope>
    <scope>PATHWAY</scope>
    <scope>TISSUE SPECIFICITY</scope>
</reference>
<dbReference type="EC" id="4.2.3.106" evidence="5"/>
<dbReference type="EMBL" id="HQ651178">
    <property type="protein sequence ID" value="AEJ91554.1"/>
    <property type="molecule type" value="mRNA"/>
</dbReference>
<dbReference type="SMR" id="G0Y7D1"/>
<dbReference type="BRENDA" id="4.2.3.106">
    <property type="organism ID" value="12979"/>
</dbReference>
<dbReference type="UniPathway" id="UPA00213"/>
<dbReference type="GO" id="GO:0009507">
    <property type="term" value="C:chloroplast"/>
    <property type="evidence" value="ECO:0007669"/>
    <property type="project" value="UniProtKB-SubCell"/>
</dbReference>
<dbReference type="GO" id="GO:0034768">
    <property type="term" value="F:(E)-beta-ocimene synthase activity"/>
    <property type="evidence" value="ECO:0000314"/>
    <property type="project" value="UniProtKB"/>
</dbReference>
<dbReference type="GO" id="GO:0000287">
    <property type="term" value="F:magnesium ion binding"/>
    <property type="evidence" value="ECO:0007669"/>
    <property type="project" value="InterPro"/>
</dbReference>
<dbReference type="GO" id="GO:0010333">
    <property type="term" value="F:terpene synthase activity"/>
    <property type="evidence" value="ECO:0007669"/>
    <property type="project" value="InterPro"/>
</dbReference>
<dbReference type="GO" id="GO:0016102">
    <property type="term" value="P:diterpenoid biosynthetic process"/>
    <property type="evidence" value="ECO:0007669"/>
    <property type="project" value="InterPro"/>
</dbReference>
<dbReference type="GO" id="GO:0010597">
    <property type="term" value="P:green leaf volatile biosynthetic process"/>
    <property type="evidence" value="ECO:0000314"/>
    <property type="project" value="UniProtKB"/>
</dbReference>
<dbReference type="GO" id="GO:0043693">
    <property type="term" value="P:monoterpene biosynthetic process"/>
    <property type="evidence" value="ECO:0000314"/>
    <property type="project" value="UniProtKB"/>
</dbReference>
<dbReference type="CDD" id="cd00684">
    <property type="entry name" value="Terpene_cyclase_plant_C1"/>
    <property type="match status" value="1"/>
</dbReference>
<dbReference type="FunFam" id="1.10.600.10:FF:000007">
    <property type="entry name" value="Isoprene synthase, chloroplastic"/>
    <property type="match status" value="1"/>
</dbReference>
<dbReference type="FunFam" id="1.50.10.130:FF:000001">
    <property type="entry name" value="Isoprene synthase, chloroplastic"/>
    <property type="match status" value="1"/>
</dbReference>
<dbReference type="Gene3D" id="1.10.600.10">
    <property type="entry name" value="Farnesyl Diphosphate Synthase"/>
    <property type="match status" value="1"/>
</dbReference>
<dbReference type="Gene3D" id="1.50.10.130">
    <property type="entry name" value="Terpene synthase, N-terminal domain"/>
    <property type="match status" value="1"/>
</dbReference>
<dbReference type="InterPro" id="IPR008949">
    <property type="entry name" value="Isoprenoid_synthase_dom_sf"/>
</dbReference>
<dbReference type="InterPro" id="IPR034741">
    <property type="entry name" value="Terpene_cyclase-like_1_C"/>
</dbReference>
<dbReference type="InterPro" id="IPR044814">
    <property type="entry name" value="Terpene_cyclase_plant_C1"/>
</dbReference>
<dbReference type="InterPro" id="IPR001906">
    <property type="entry name" value="Terpene_synth_N"/>
</dbReference>
<dbReference type="InterPro" id="IPR036965">
    <property type="entry name" value="Terpene_synth_N_sf"/>
</dbReference>
<dbReference type="InterPro" id="IPR050148">
    <property type="entry name" value="Terpene_synthase-like"/>
</dbReference>
<dbReference type="InterPro" id="IPR005630">
    <property type="entry name" value="Terpene_synthase_metal-bd"/>
</dbReference>
<dbReference type="InterPro" id="IPR008930">
    <property type="entry name" value="Terpenoid_cyclase/PrenylTrfase"/>
</dbReference>
<dbReference type="PANTHER" id="PTHR31225">
    <property type="entry name" value="OS04G0344100 PROTEIN-RELATED"/>
    <property type="match status" value="1"/>
</dbReference>
<dbReference type="PANTHER" id="PTHR31225:SF98">
    <property type="entry name" value="TERPENE SYNTHASE 9-RELATED"/>
    <property type="match status" value="1"/>
</dbReference>
<dbReference type="Pfam" id="PF01397">
    <property type="entry name" value="Terpene_synth"/>
    <property type="match status" value="1"/>
</dbReference>
<dbReference type="Pfam" id="PF03936">
    <property type="entry name" value="Terpene_synth_C"/>
    <property type="match status" value="1"/>
</dbReference>
<dbReference type="SFLD" id="SFLDS00005">
    <property type="entry name" value="Isoprenoid_Synthase_Type_I"/>
    <property type="match status" value="1"/>
</dbReference>
<dbReference type="SFLD" id="SFLDG01019">
    <property type="entry name" value="Terpene_Cyclase_Like_1_C_Termi"/>
    <property type="match status" value="1"/>
</dbReference>
<dbReference type="SUPFAM" id="SSF48239">
    <property type="entry name" value="Terpenoid cyclases/Protein prenyltransferases"/>
    <property type="match status" value="1"/>
</dbReference>
<dbReference type="SUPFAM" id="SSF48576">
    <property type="entry name" value="Terpenoid synthases"/>
    <property type="match status" value="1"/>
</dbReference>